<dbReference type="EMBL" id="AY264369">
    <property type="protein sequence ID" value="AAP22136.1"/>
    <property type="molecule type" value="mRNA"/>
</dbReference>
<dbReference type="RefSeq" id="NP_001105669.1">
    <property type="nucleotide sequence ID" value="NM_001112199.1"/>
</dbReference>
<dbReference type="SMR" id="Q84N48"/>
<dbReference type="BioGRID" id="951897">
    <property type="interactions" value="1"/>
</dbReference>
<dbReference type="DIP" id="DIP-48741N"/>
<dbReference type="FunCoup" id="Q84N48">
    <property type="interactions" value="3559"/>
</dbReference>
<dbReference type="IntAct" id="Q84N48">
    <property type="interactions" value="5"/>
</dbReference>
<dbReference type="STRING" id="4577.Q84N48"/>
<dbReference type="PaxDb" id="4577-AC199526.5_FGP003"/>
<dbReference type="EnsemblPlants" id="Zm00001eb130860_T001">
    <property type="protein sequence ID" value="Zm00001eb130860_P001"/>
    <property type="gene ID" value="Zm00001eb130860"/>
</dbReference>
<dbReference type="GeneID" id="542682"/>
<dbReference type="Gramene" id="Zm00001eb130860_T001">
    <property type="protein sequence ID" value="Zm00001eb130860_P001"/>
    <property type="gene ID" value="Zm00001eb130860"/>
</dbReference>
<dbReference type="KEGG" id="zma:542682"/>
<dbReference type="MaizeGDB" id="886551"/>
<dbReference type="eggNOG" id="ENOG502QW9P">
    <property type="taxonomic scope" value="Eukaryota"/>
</dbReference>
<dbReference type="HOGENOM" id="CLU_012688_1_0_1"/>
<dbReference type="InParanoid" id="Q84N48"/>
<dbReference type="OrthoDB" id="2021019at2759"/>
<dbReference type="Proteomes" id="UP000007305">
    <property type="component" value="Chromosome 3"/>
</dbReference>
<dbReference type="ExpressionAtlas" id="Q84N48">
    <property type="expression patterns" value="baseline and differential"/>
</dbReference>
<dbReference type="GO" id="GO:0009570">
    <property type="term" value="C:chloroplast stroma"/>
    <property type="evidence" value="ECO:0007669"/>
    <property type="project" value="UniProtKB-SubCell"/>
</dbReference>
<dbReference type="GO" id="GO:1990904">
    <property type="term" value="C:ribonucleoprotein complex"/>
    <property type="evidence" value="ECO:0007669"/>
    <property type="project" value="UniProtKB-KW"/>
</dbReference>
<dbReference type="GO" id="GO:0003723">
    <property type="term" value="F:RNA binding"/>
    <property type="evidence" value="ECO:0007669"/>
    <property type="project" value="UniProtKB-KW"/>
</dbReference>
<dbReference type="GO" id="GO:0000373">
    <property type="term" value="P:Group II intron splicing"/>
    <property type="evidence" value="ECO:0007669"/>
    <property type="project" value="InterPro"/>
</dbReference>
<dbReference type="GO" id="GO:0006397">
    <property type="term" value="P:mRNA processing"/>
    <property type="evidence" value="ECO:0007669"/>
    <property type="project" value="UniProtKB-KW"/>
</dbReference>
<dbReference type="FunFam" id="3.30.110.60:FF:000002">
    <property type="entry name" value="CRS2-associated factor 1, chloroplastic"/>
    <property type="match status" value="2"/>
</dbReference>
<dbReference type="Gene3D" id="3.30.110.60">
    <property type="entry name" value="YhbY-like"/>
    <property type="match status" value="2"/>
</dbReference>
<dbReference type="InterPro" id="IPR044599">
    <property type="entry name" value="CAF1P_plant"/>
</dbReference>
<dbReference type="InterPro" id="IPR001890">
    <property type="entry name" value="RNA-binding_CRM"/>
</dbReference>
<dbReference type="InterPro" id="IPR035920">
    <property type="entry name" value="YhbY-like_sf"/>
</dbReference>
<dbReference type="PANTHER" id="PTHR46247">
    <property type="entry name" value="CRS2-ASSOCIATED FACTOR 1, CHLOROPLASTIC"/>
    <property type="match status" value="1"/>
</dbReference>
<dbReference type="PANTHER" id="PTHR46247:SF3">
    <property type="entry name" value="CRS2-ASSOCIATED FACTOR 2, CHLOROPLASTIC"/>
    <property type="match status" value="1"/>
</dbReference>
<dbReference type="Pfam" id="PF01985">
    <property type="entry name" value="CRS1_YhbY"/>
    <property type="match status" value="2"/>
</dbReference>
<dbReference type="SMART" id="SM01103">
    <property type="entry name" value="CRS1_YhbY"/>
    <property type="match status" value="2"/>
</dbReference>
<dbReference type="SUPFAM" id="SSF75471">
    <property type="entry name" value="YhbY-like"/>
    <property type="match status" value="2"/>
</dbReference>
<dbReference type="PROSITE" id="PS51295">
    <property type="entry name" value="CRM"/>
    <property type="match status" value="2"/>
</dbReference>
<proteinExistence type="evidence at protein level"/>
<reference key="1">
    <citation type="journal article" date="2003" name="EMBO J.">
        <title>Group II intron splicing factors derived by diversification of an ancient RNA-binding domain.</title>
        <authorList>
            <person name="Ostheimer G.J."/>
            <person name="Williams-Carrier R."/>
            <person name="Belcher S."/>
            <person name="Osborne E."/>
            <person name="Gierke J."/>
            <person name="Barkan A."/>
        </authorList>
    </citation>
    <scope>NUCLEOTIDE SEQUENCE [MRNA]</scope>
    <scope>FUNCTION</scope>
    <scope>SUBCELLULAR LOCATION</scope>
    <scope>INTERACTION WITH CRS2</scope>
    <source>
        <strain>cv. B73</strain>
    </source>
</reference>
<reference key="2">
    <citation type="journal article" date="2006" name="J. Biol. Chem.">
        <title>Formation of the CRS2-CAF2 group II intron splicing complex is mediated by a 22-amino acid motif in the COOH-terminal region of CAF2.</title>
        <authorList>
            <person name="Ostheimer G.J."/>
            <person name="Rojas M."/>
            <person name="Hadjivassiliou H."/>
            <person name="Barkan A."/>
        </authorList>
    </citation>
    <scope>INTERACTION WITH CRS2</scope>
</reference>
<sequence>MPPPPPQRPASSHVGRANLFSASPPPLSNRRYPHHRSLPLPPVSPRRRDPKKHSQQPSQEEPTDSGPTRTVTTNPAFRAAHLRTAYRKPVPPAAAAGEGEALLAADPTDAASGRAVVVGPSGLSFRLPGAPFDFQFSYSEAPRAPPLAIREPAFLPFAPPTMPRPWTGKAPLLTKEEKARRRGVRLHTPLGQETPQTVSAHGIMMEVRERRKMDLARVSPGDGRSREEVLGEPLTPSEVRALVKPHISHNRQLNIGRDGLTHNMLEMIHCHWRRQEICKVRCRGVPTVDMKNLCYHLEEKSGGKVIHRVGGVVFLYRGRHYDPKTRPRYPLMLWKPATPVYPKLIKEAPDGFTKEEADEMRRKGRDLLPICKLAKNGIYITLVKDVRDAFEGSDLVKIDCEGLNPSDYKKIGAKLRDLVPCVLLSFDDEQILMHRGKEWKSRYSKPLTLIPKVPKNNLAMTSVMNSSDEVSDANTQVAIREVLRPKMFKLWKSAVDSSLALLLDDAEANNLTPDSLLTLVEEFSVTSQAVEHSFPALLVTNGDASTDSLSAEYMNDEPETSVAGNEEGQLEQSPDLRDDEHFDVDMFERLESSVPLGSLPIDSMIERLNSE</sequence>
<feature type="transit peptide" description="Chloroplast" evidence="1">
    <location>
        <begin position="1"/>
        <end position="58"/>
    </location>
</feature>
<feature type="chain" id="PRO_0000283620" description="CRS2-associated factor 2, chloroplastic">
    <location>
        <begin position="59"/>
        <end position="611"/>
    </location>
</feature>
<feature type="domain" description="CRM 1" evidence="2">
    <location>
        <begin position="232"/>
        <end position="328"/>
    </location>
</feature>
<feature type="domain" description="CRM 2" evidence="2">
    <location>
        <begin position="350"/>
        <end position="446"/>
    </location>
</feature>
<feature type="region of interest" description="Disordered" evidence="3">
    <location>
        <begin position="1"/>
        <end position="72"/>
    </location>
</feature>
<feature type="region of interest" description="CRS2 binding">
    <location>
        <begin position="486"/>
        <end position="509"/>
    </location>
</feature>
<feature type="region of interest" description="Disordered" evidence="3">
    <location>
        <begin position="554"/>
        <end position="578"/>
    </location>
</feature>
<feature type="compositionally biased region" description="Polar residues" evidence="3">
    <location>
        <begin position="55"/>
        <end position="72"/>
    </location>
</feature>
<keyword id="KW-0150">Chloroplast</keyword>
<keyword id="KW-0507">mRNA processing</keyword>
<keyword id="KW-0508">mRNA splicing</keyword>
<keyword id="KW-0934">Plastid</keyword>
<keyword id="KW-1185">Reference proteome</keyword>
<keyword id="KW-0677">Repeat</keyword>
<keyword id="KW-0687">Ribonucleoprotein</keyword>
<keyword id="KW-0694">RNA-binding</keyword>
<keyword id="KW-0809">Transit peptide</keyword>
<comment type="function">
    <text evidence="4">Required for the splicing of group IIB introns in chloroplasts. Forms splicing particles with CRS2. Interacts with RNA and confers intron specificity of the splicing particles.</text>
</comment>
<comment type="subunit">
    <text evidence="4 5">Interacts with CRS2 and RNA. Part of large ribonucleo-protein complexes that include group IIB introns, CRS2 and CAF2.</text>
</comment>
<comment type="interaction">
    <interactant intactId="EBI-15761721">
        <id>Q84N48</id>
    </interactant>
    <interactant intactId="EBI-15761773">
        <id>A7UDM2</id>
        <label>CFM2</label>
    </interactant>
    <organismsDiffer>false</organismsDiffer>
    <experiments>2</experiments>
</comment>
<comment type="interaction">
    <interactant intactId="EBI-15761721">
        <id>Q84N48</id>
    </interactant>
    <interactant intactId="EBI-15761679">
        <id>B6TTV8</id>
        <label>WTF1</label>
    </interactant>
    <organismsDiffer>false</organismsDiffer>
    <experiments>3</experiments>
</comment>
<comment type="subcellular location">
    <subcellularLocation>
        <location evidence="4">Plastid</location>
        <location evidence="4">Chloroplast stroma</location>
    </subcellularLocation>
</comment>
<name>CAF2P_MAIZE</name>
<gene>
    <name type="primary">CAF2</name>
</gene>
<accession>Q84N48</accession>
<evidence type="ECO:0000255" key="1"/>
<evidence type="ECO:0000255" key="2">
    <source>
        <dbReference type="PROSITE-ProRule" id="PRU00626"/>
    </source>
</evidence>
<evidence type="ECO:0000256" key="3">
    <source>
        <dbReference type="SAM" id="MobiDB-lite"/>
    </source>
</evidence>
<evidence type="ECO:0000269" key="4">
    <source>
    </source>
</evidence>
<evidence type="ECO:0000269" key="5">
    <source>
    </source>
</evidence>
<organism>
    <name type="scientific">Zea mays</name>
    <name type="common">Maize</name>
    <dbReference type="NCBI Taxonomy" id="4577"/>
    <lineage>
        <taxon>Eukaryota</taxon>
        <taxon>Viridiplantae</taxon>
        <taxon>Streptophyta</taxon>
        <taxon>Embryophyta</taxon>
        <taxon>Tracheophyta</taxon>
        <taxon>Spermatophyta</taxon>
        <taxon>Magnoliopsida</taxon>
        <taxon>Liliopsida</taxon>
        <taxon>Poales</taxon>
        <taxon>Poaceae</taxon>
        <taxon>PACMAD clade</taxon>
        <taxon>Panicoideae</taxon>
        <taxon>Andropogonodae</taxon>
        <taxon>Andropogoneae</taxon>
        <taxon>Tripsacinae</taxon>
        <taxon>Zea</taxon>
    </lineage>
</organism>
<protein>
    <recommendedName>
        <fullName>CRS2-associated factor 2, chloroplastic</fullName>
    </recommendedName>
    <alternativeName>
        <fullName>Chloroplastic group IIA intron splicing facilitator CRS2-associated factor 2</fullName>
    </alternativeName>
</protein>